<keyword id="KW-0963">Cytoplasm</keyword>
<keyword id="KW-0342">GTP-binding</keyword>
<keyword id="KW-0460">Magnesium</keyword>
<keyword id="KW-0479">Metal-binding</keyword>
<keyword id="KW-0501">Molybdenum cofactor biosynthesis</keyword>
<keyword id="KW-0547">Nucleotide-binding</keyword>
<keyword id="KW-1185">Reference proteome</keyword>
<keyword id="KW-0808">Transferase</keyword>
<feature type="chain" id="PRO_0000134928" description="Probable molybdenum cofactor guanylyltransferase">
    <location>
        <begin position="1"/>
        <end position="204"/>
    </location>
</feature>
<feature type="binding site" evidence="1">
    <location>
        <begin position="10"/>
        <end position="12"/>
    </location>
    <ligand>
        <name>GTP</name>
        <dbReference type="ChEBI" id="CHEBI:37565"/>
    </ligand>
</feature>
<feature type="binding site" evidence="1">
    <location>
        <position position="22"/>
    </location>
    <ligand>
        <name>GTP</name>
        <dbReference type="ChEBI" id="CHEBI:37565"/>
    </ligand>
</feature>
<feature type="binding site" evidence="1">
    <location>
        <position position="75"/>
    </location>
    <ligand>
        <name>GTP</name>
        <dbReference type="ChEBI" id="CHEBI:37565"/>
    </ligand>
</feature>
<feature type="binding site" evidence="1">
    <location>
        <position position="104"/>
    </location>
    <ligand>
        <name>GTP</name>
        <dbReference type="ChEBI" id="CHEBI:37565"/>
    </ligand>
</feature>
<feature type="binding site" evidence="1">
    <location>
        <position position="104"/>
    </location>
    <ligand>
        <name>Mg(2+)</name>
        <dbReference type="ChEBI" id="CHEBI:18420"/>
    </ligand>
</feature>
<sequence>MVTIIAGIILSGGKGERIGGKKPFRVFNGKYLINYPSDILKSLNIPFVTVFAKNSIDLEMEKEYLTKYKCLISFDLIEGKGPLMGILCGMRVLNAKWFVVLPCDCPYINKEALKKLISNISIAEKNNNLCIIPKHENGYIEPLFALYKRDALSILNKIIMEDKNLSIRYFISYLNPLYIKAEELDESKRIFKNINTIEELMDNE</sequence>
<organism>
    <name type="scientific">Methanocaldococcus jannaschii (strain ATCC 43067 / DSM 2661 / JAL-1 / JCM 10045 / NBRC 100440)</name>
    <name type="common">Methanococcus jannaschii</name>
    <dbReference type="NCBI Taxonomy" id="243232"/>
    <lineage>
        <taxon>Archaea</taxon>
        <taxon>Methanobacteriati</taxon>
        <taxon>Methanobacteriota</taxon>
        <taxon>Methanomada group</taxon>
        <taxon>Methanococci</taxon>
        <taxon>Methanococcales</taxon>
        <taxon>Methanocaldococcaceae</taxon>
        <taxon>Methanocaldococcus</taxon>
    </lineage>
</organism>
<evidence type="ECO:0000255" key="1">
    <source>
        <dbReference type="HAMAP-Rule" id="MF_00316"/>
    </source>
</evidence>
<protein>
    <recommendedName>
        <fullName evidence="1">Probable molybdenum cofactor guanylyltransferase</fullName>
        <shortName evidence="1">MoCo guanylyltransferase</shortName>
        <ecNumber evidence="1">2.7.7.77</ecNumber>
    </recommendedName>
    <alternativeName>
        <fullName evidence="1">GTP:molybdopterin guanylyltransferase</fullName>
    </alternativeName>
    <alternativeName>
        <fullName evidence="1">Mo-MPT guanylyltransferase</fullName>
    </alternativeName>
    <alternativeName>
        <fullName evidence="1">Molybdopterin guanylyltransferase</fullName>
    </alternativeName>
    <alternativeName>
        <fullName evidence="1">Molybdopterin-guanine dinucleotide synthase</fullName>
        <shortName evidence="1">MGD synthase</shortName>
    </alternativeName>
</protein>
<gene>
    <name evidence="1" type="primary">mobA</name>
    <name type="ordered locus">MJ1663</name>
</gene>
<comment type="function">
    <text evidence="1">Transfers a GMP moiety from GTP to Mo-molybdopterin (Mo-MPT) cofactor (Moco or molybdenum cofactor) to form Mo-molybdopterin guanine dinucleotide (Mo-MGD) cofactor.</text>
</comment>
<comment type="catalytic activity">
    <reaction evidence="1">
        <text>Mo-molybdopterin + GTP + H(+) = Mo-molybdopterin guanine dinucleotide + diphosphate</text>
        <dbReference type="Rhea" id="RHEA:34243"/>
        <dbReference type="ChEBI" id="CHEBI:15378"/>
        <dbReference type="ChEBI" id="CHEBI:33019"/>
        <dbReference type="ChEBI" id="CHEBI:37565"/>
        <dbReference type="ChEBI" id="CHEBI:71302"/>
        <dbReference type="ChEBI" id="CHEBI:71310"/>
        <dbReference type="EC" id="2.7.7.77"/>
    </reaction>
</comment>
<comment type="cofactor">
    <cofactor evidence="1">
        <name>Mg(2+)</name>
        <dbReference type="ChEBI" id="CHEBI:18420"/>
    </cofactor>
</comment>
<comment type="subcellular location">
    <subcellularLocation>
        <location evidence="1">Cytoplasm</location>
    </subcellularLocation>
</comment>
<comment type="domain">
    <text evidence="1">The N-terminal domain determines nucleotide recognition and specific binding, while the C-terminal domain determines the specific binding to the target protein.</text>
</comment>
<comment type="similarity">
    <text evidence="1">Belongs to the MobA family.</text>
</comment>
<dbReference type="EC" id="2.7.7.77" evidence="1"/>
<dbReference type="EMBL" id="L77117">
    <property type="protein sequence ID" value="AAB99681.1"/>
    <property type="molecule type" value="Genomic_DNA"/>
</dbReference>
<dbReference type="PIR" id="E64507">
    <property type="entry name" value="E64507"/>
</dbReference>
<dbReference type="RefSeq" id="WP_010871187.1">
    <property type="nucleotide sequence ID" value="NC_000909.1"/>
</dbReference>
<dbReference type="SMR" id="Q59057"/>
<dbReference type="FunCoup" id="Q59057">
    <property type="interactions" value="1"/>
</dbReference>
<dbReference type="STRING" id="243232.MJ_1663"/>
<dbReference type="PaxDb" id="243232-MJ_1663"/>
<dbReference type="EnsemblBacteria" id="AAB99681">
    <property type="protein sequence ID" value="AAB99681"/>
    <property type="gene ID" value="MJ_1663"/>
</dbReference>
<dbReference type="GeneID" id="1452572"/>
<dbReference type="KEGG" id="mja:MJ_1663"/>
<dbReference type="eggNOG" id="arCOG01872">
    <property type="taxonomic scope" value="Archaea"/>
</dbReference>
<dbReference type="HOGENOM" id="CLU_055597_2_0_2"/>
<dbReference type="InParanoid" id="Q59057"/>
<dbReference type="OrthoDB" id="28434at2157"/>
<dbReference type="PhylomeDB" id="Q59057"/>
<dbReference type="Proteomes" id="UP000000805">
    <property type="component" value="Chromosome"/>
</dbReference>
<dbReference type="GO" id="GO:0005737">
    <property type="term" value="C:cytoplasm"/>
    <property type="evidence" value="ECO:0007669"/>
    <property type="project" value="UniProtKB-SubCell"/>
</dbReference>
<dbReference type="GO" id="GO:0005525">
    <property type="term" value="F:GTP binding"/>
    <property type="evidence" value="ECO:0007669"/>
    <property type="project" value="UniProtKB-UniRule"/>
</dbReference>
<dbReference type="GO" id="GO:0046872">
    <property type="term" value="F:metal ion binding"/>
    <property type="evidence" value="ECO:0007669"/>
    <property type="project" value="UniProtKB-KW"/>
</dbReference>
<dbReference type="GO" id="GO:0061603">
    <property type="term" value="F:molybdenum cofactor guanylyltransferase activity"/>
    <property type="evidence" value="ECO:0007669"/>
    <property type="project" value="UniProtKB-EC"/>
</dbReference>
<dbReference type="GO" id="GO:0016779">
    <property type="term" value="F:nucleotidyltransferase activity"/>
    <property type="evidence" value="ECO:0000318"/>
    <property type="project" value="GO_Central"/>
</dbReference>
<dbReference type="GO" id="GO:0006777">
    <property type="term" value="P:Mo-molybdopterin cofactor biosynthetic process"/>
    <property type="evidence" value="ECO:0007669"/>
    <property type="project" value="UniProtKB-KW"/>
</dbReference>
<dbReference type="CDD" id="cd02503">
    <property type="entry name" value="MobA"/>
    <property type="match status" value="1"/>
</dbReference>
<dbReference type="Gene3D" id="3.90.550.10">
    <property type="entry name" value="Spore Coat Polysaccharide Biosynthesis Protein SpsA, Chain A"/>
    <property type="match status" value="1"/>
</dbReference>
<dbReference type="HAMAP" id="MF_00316">
    <property type="entry name" value="MobA"/>
    <property type="match status" value="1"/>
</dbReference>
<dbReference type="InterPro" id="IPR025877">
    <property type="entry name" value="MobA-like_NTP_Trfase"/>
</dbReference>
<dbReference type="InterPro" id="IPR013482">
    <property type="entry name" value="Molybde_CF_guanTrfase"/>
</dbReference>
<dbReference type="InterPro" id="IPR029044">
    <property type="entry name" value="Nucleotide-diphossugar_trans"/>
</dbReference>
<dbReference type="PANTHER" id="PTHR19136">
    <property type="entry name" value="MOLYBDENUM COFACTOR GUANYLYLTRANSFERASE"/>
    <property type="match status" value="1"/>
</dbReference>
<dbReference type="PANTHER" id="PTHR19136:SF81">
    <property type="entry name" value="MOLYBDENUM COFACTOR GUANYLYLTRANSFERASE"/>
    <property type="match status" value="1"/>
</dbReference>
<dbReference type="Pfam" id="PF12804">
    <property type="entry name" value="NTP_transf_3"/>
    <property type="match status" value="1"/>
</dbReference>
<dbReference type="SUPFAM" id="SSF53448">
    <property type="entry name" value="Nucleotide-diphospho-sugar transferases"/>
    <property type="match status" value="1"/>
</dbReference>
<proteinExistence type="inferred from homology"/>
<accession>Q59057</accession>
<name>MOBA_METJA</name>
<reference key="1">
    <citation type="journal article" date="1996" name="Science">
        <title>Complete genome sequence of the methanogenic archaeon, Methanococcus jannaschii.</title>
        <authorList>
            <person name="Bult C.J."/>
            <person name="White O."/>
            <person name="Olsen G.J."/>
            <person name="Zhou L."/>
            <person name="Fleischmann R.D."/>
            <person name="Sutton G.G."/>
            <person name="Blake J.A."/>
            <person name="FitzGerald L.M."/>
            <person name="Clayton R.A."/>
            <person name="Gocayne J.D."/>
            <person name="Kerlavage A.R."/>
            <person name="Dougherty B.A."/>
            <person name="Tomb J.-F."/>
            <person name="Adams M.D."/>
            <person name="Reich C.I."/>
            <person name="Overbeek R."/>
            <person name="Kirkness E.F."/>
            <person name="Weinstock K.G."/>
            <person name="Merrick J.M."/>
            <person name="Glodek A."/>
            <person name="Scott J.L."/>
            <person name="Geoghagen N.S.M."/>
            <person name="Weidman J.F."/>
            <person name="Fuhrmann J.L."/>
            <person name="Nguyen D."/>
            <person name="Utterback T.R."/>
            <person name="Kelley J.M."/>
            <person name="Peterson J.D."/>
            <person name="Sadow P.W."/>
            <person name="Hanna M.C."/>
            <person name="Cotton M.D."/>
            <person name="Roberts K.M."/>
            <person name="Hurst M.A."/>
            <person name="Kaine B.P."/>
            <person name="Borodovsky M."/>
            <person name="Klenk H.-P."/>
            <person name="Fraser C.M."/>
            <person name="Smith H.O."/>
            <person name="Woese C.R."/>
            <person name="Venter J.C."/>
        </authorList>
    </citation>
    <scope>NUCLEOTIDE SEQUENCE [LARGE SCALE GENOMIC DNA]</scope>
    <source>
        <strain>ATCC 43067 / DSM 2661 / JAL-1 / JCM 10045 / NBRC 100440</strain>
    </source>
</reference>